<keyword id="KW-0963">Cytoplasm</keyword>
<keyword id="KW-0648">Protein biosynthesis</keyword>
<keyword id="KW-1185">Reference proteome</keyword>
<dbReference type="EMBL" id="CP000490">
    <property type="protein sequence ID" value="ABL72060.1"/>
    <property type="molecule type" value="Genomic_DNA"/>
</dbReference>
<dbReference type="RefSeq" id="WP_011750228.1">
    <property type="nucleotide sequence ID" value="NC_008687.1"/>
</dbReference>
<dbReference type="SMR" id="A1B966"/>
<dbReference type="STRING" id="318586.Pden_3994"/>
<dbReference type="EnsemblBacteria" id="ABL72060">
    <property type="protein sequence ID" value="ABL72060"/>
    <property type="gene ID" value="Pden_3994"/>
</dbReference>
<dbReference type="GeneID" id="93453655"/>
<dbReference type="KEGG" id="pde:Pden_3994"/>
<dbReference type="eggNOG" id="COG0233">
    <property type="taxonomic scope" value="Bacteria"/>
</dbReference>
<dbReference type="HOGENOM" id="CLU_073981_2_0_5"/>
<dbReference type="OrthoDB" id="9804006at2"/>
<dbReference type="Proteomes" id="UP000000361">
    <property type="component" value="Chromosome 2"/>
</dbReference>
<dbReference type="GO" id="GO:0005829">
    <property type="term" value="C:cytosol"/>
    <property type="evidence" value="ECO:0007669"/>
    <property type="project" value="GOC"/>
</dbReference>
<dbReference type="GO" id="GO:0043023">
    <property type="term" value="F:ribosomal large subunit binding"/>
    <property type="evidence" value="ECO:0007669"/>
    <property type="project" value="TreeGrafter"/>
</dbReference>
<dbReference type="GO" id="GO:0002184">
    <property type="term" value="P:cytoplasmic translational termination"/>
    <property type="evidence" value="ECO:0007669"/>
    <property type="project" value="TreeGrafter"/>
</dbReference>
<dbReference type="CDD" id="cd00520">
    <property type="entry name" value="RRF"/>
    <property type="match status" value="1"/>
</dbReference>
<dbReference type="FunFam" id="1.10.132.20:FF:000001">
    <property type="entry name" value="Ribosome-recycling factor"/>
    <property type="match status" value="1"/>
</dbReference>
<dbReference type="FunFam" id="3.30.1360.40:FF:000001">
    <property type="entry name" value="Ribosome-recycling factor"/>
    <property type="match status" value="1"/>
</dbReference>
<dbReference type="Gene3D" id="3.30.1360.40">
    <property type="match status" value="1"/>
</dbReference>
<dbReference type="Gene3D" id="1.10.132.20">
    <property type="entry name" value="Ribosome-recycling factor"/>
    <property type="match status" value="1"/>
</dbReference>
<dbReference type="HAMAP" id="MF_00040">
    <property type="entry name" value="RRF"/>
    <property type="match status" value="1"/>
</dbReference>
<dbReference type="InterPro" id="IPR002661">
    <property type="entry name" value="Ribosome_recyc_fac"/>
</dbReference>
<dbReference type="InterPro" id="IPR023584">
    <property type="entry name" value="Ribosome_recyc_fac_dom"/>
</dbReference>
<dbReference type="InterPro" id="IPR036191">
    <property type="entry name" value="RRF_sf"/>
</dbReference>
<dbReference type="NCBIfam" id="TIGR00496">
    <property type="entry name" value="frr"/>
    <property type="match status" value="1"/>
</dbReference>
<dbReference type="PANTHER" id="PTHR20982:SF3">
    <property type="entry name" value="MITOCHONDRIAL RIBOSOME RECYCLING FACTOR PSEUDO 1"/>
    <property type="match status" value="1"/>
</dbReference>
<dbReference type="PANTHER" id="PTHR20982">
    <property type="entry name" value="RIBOSOME RECYCLING FACTOR"/>
    <property type="match status" value="1"/>
</dbReference>
<dbReference type="Pfam" id="PF01765">
    <property type="entry name" value="RRF"/>
    <property type="match status" value="1"/>
</dbReference>
<dbReference type="SUPFAM" id="SSF55194">
    <property type="entry name" value="Ribosome recycling factor, RRF"/>
    <property type="match status" value="1"/>
</dbReference>
<feature type="chain" id="PRO_1000003217" description="Ribosome-recycling factor">
    <location>
        <begin position="1"/>
        <end position="187"/>
    </location>
</feature>
<reference key="1">
    <citation type="submission" date="2006-12" db="EMBL/GenBank/DDBJ databases">
        <title>Complete sequence of chromosome 2 of Paracoccus denitrificans PD1222.</title>
        <authorList>
            <person name="Copeland A."/>
            <person name="Lucas S."/>
            <person name="Lapidus A."/>
            <person name="Barry K."/>
            <person name="Detter J.C."/>
            <person name="Glavina del Rio T."/>
            <person name="Hammon N."/>
            <person name="Israni S."/>
            <person name="Dalin E."/>
            <person name="Tice H."/>
            <person name="Pitluck S."/>
            <person name="Munk A.C."/>
            <person name="Brettin T."/>
            <person name="Bruce D."/>
            <person name="Han C."/>
            <person name="Tapia R."/>
            <person name="Gilna P."/>
            <person name="Schmutz J."/>
            <person name="Larimer F."/>
            <person name="Land M."/>
            <person name="Hauser L."/>
            <person name="Kyrpides N."/>
            <person name="Lykidis A."/>
            <person name="Spiro S."/>
            <person name="Richardson D.J."/>
            <person name="Moir J.W.B."/>
            <person name="Ferguson S.J."/>
            <person name="van Spanning R.J.M."/>
            <person name="Richardson P."/>
        </authorList>
    </citation>
    <scope>NUCLEOTIDE SEQUENCE [LARGE SCALE GENOMIC DNA]</scope>
    <source>
        <strain>Pd 1222</strain>
    </source>
</reference>
<name>RRF_PARDP</name>
<evidence type="ECO:0000255" key="1">
    <source>
        <dbReference type="HAMAP-Rule" id="MF_00040"/>
    </source>
</evidence>
<organism>
    <name type="scientific">Paracoccus denitrificans (strain Pd 1222)</name>
    <dbReference type="NCBI Taxonomy" id="318586"/>
    <lineage>
        <taxon>Bacteria</taxon>
        <taxon>Pseudomonadati</taxon>
        <taxon>Pseudomonadota</taxon>
        <taxon>Alphaproteobacteria</taxon>
        <taxon>Rhodobacterales</taxon>
        <taxon>Paracoccaceae</taxon>
        <taxon>Paracoccus</taxon>
    </lineage>
</organism>
<comment type="function">
    <text evidence="1">Responsible for the release of ribosomes from messenger RNA at the termination of protein biosynthesis. May increase the efficiency of translation by recycling ribosomes from one round of translation to another.</text>
</comment>
<comment type="subcellular location">
    <subcellularLocation>
        <location evidence="1">Cytoplasm</location>
    </subcellularLocation>
</comment>
<comment type="similarity">
    <text evidence="1">Belongs to the RRF family.</text>
</comment>
<sequence>MSDEIEIDTDDLERRMKGAMESLRHEFASLRTGRASASMVEPIMVDAYGSPTPINQIGTVNVPEPRMVTINIWDKGLVGKAEKAIRESGLGINPQLNGTIIMLPIPELNEERRRELTRVAAQYAEHARVAIRNVRRDGMDQIKKAKSSGMSEDDQKFWEGAVQELTDKMIASVDQALEAKQAEIMQV</sequence>
<accession>A1B966</accession>
<protein>
    <recommendedName>
        <fullName evidence="1">Ribosome-recycling factor</fullName>
        <shortName evidence="1">RRF</shortName>
    </recommendedName>
    <alternativeName>
        <fullName evidence="1">Ribosome-releasing factor</fullName>
    </alternativeName>
</protein>
<gene>
    <name evidence="1" type="primary">frr</name>
    <name type="ordered locus">Pden_3994</name>
</gene>
<proteinExistence type="inferred from homology"/>